<name>MED8_NEOFI</name>
<keyword id="KW-0010">Activator</keyword>
<keyword id="KW-0175">Coiled coil</keyword>
<keyword id="KW-0539">Nucleus</keyword>
<keyword id="KW-1185">Reference proteome</keyword>
<keyword id="KW-0804">Transcription</keyword>
<keyword id="KW-0805">Transcription regulation</keyword>
<evidence type="ECO:0000250" key="1"/>
<evidence type="ECO:0000255" key="2"/>
<evidence type="ECO:0000256" key="3">
    <source>
        <dbReference type="SAM" id="MobiDB-lite"/>
    </source>
</evidence>
<evidence type="ECO:0000305" key="4"/>
<feature type="chain" id="PRO_0000304545" description="Mediator of RNA polymerase II transcription subunit 8">
    <location>
        <begin position="1"/>
        <end position="252"/>
    </location>
</feature>
<feature type="region of interest" description="Disordered" evidence="3">
    <location>
        <begin position="170"/>
        <end position="252"/>
    </location>
</feature>
<feature type="coiled-coil region" evidence="2">
    <location>
        <begin position="6"/>
        <end position="30"/>
    </location>
</feature>
<feature type="compositionally biased region" description="Acidic residues" evidence="3">
    <location>
        <begin position="173"/>
        <end position="196"/>
    </location>
</feature>
<gene>
    <name type="primary">med8</name>
    <name type="ORF">NFIA_107800</name>
</gene>
<comment type="function">
    <text evidence="1">Component of the Mediator complex, a coactivator involved in the regulated transcription of nearly all RNA polymerase II-dependent genes. Mediator functions as a bridge to convey information from gene-specific regulatory proteins to the basal RNA polymerase II transcription machinery. Mediator is recruited to promoters by direct interactions with regulatory proteins and serves as a scaffold for the assembly of a functional preinitiation complex with RNA polymerase II and the general transcription factors (By similarity).</text>
</comment>
<comment type="subunit">
    <text evidence="1">Component of the Mediator complex.</text>
</comment>
<comment type="subcellular location">
    <subcellularLocation>
        <location evidence="4">Nucleus</location>
    </subcellularLocation>
</comment>
<comment type="similarity">
    <text evidence="4">Belongs to the Mediator complex subunit 8 family.</text>
</comment>
<organism>
    <name type="scientific">Neosartorya fischeri (strain ATCC 1020 / DSM 3700 / CBS 544.65 / FGSC A1164 / JCM 1740 / NRRL 181 / WB 181)</name>
    <name type="common">Aspergillus fischerianus</name>
    <dbReference type="NCBI Taxonomy" id="331117"/>
    <lineage>
        <taxon>Eukaryota</taxon>
        <taxon>Fungi</taxon>
        <taxon>Dikarya</taxon>
        <taxon>Ascomycota</taxon>
        <taxon>Pezizomycotina</taxon>
        <taxon>Eurotiomycetes</taxon>
        <taxon>Eurotiomycetidae</taxon>
        <taxon>Eurotiales</taxon>
        <taxon>Aspergillaceae</taxon>
        <taxon>Aspergillus</taxon>
        <taxon>Aspergillus subgen. Fumigati</taxon>
    </lineage>
</organism>
<reference key="1">
    <citation type="journal article" date="2008" name="PLoS Genet.">
        <title>Genomic islands in the pathogenic filamentous fungus Aspergillus fumigatus.</title>
        <authorList>
            <person name="Fedorova N.D."/>
            <person name="Khaldi N."/>
            <person name="Joardar V.S."/>
            <person name="Maiti R."/>
            <person name="Amedeo P."/>
            <person name="Anderson M.J."/>
            <person name="Crabtree J."/>
            <person name="Silva J.C."/>
            <person name="Badger J.H."/>
            <person name="Albarraq A."/>
            <person name="Angiuoli S."/>
            <person name="Bussey H."/>
            <person name="Bowyer P."/>
            <person name="Cotty P.J."/>
            <person name="Dyer P.S."/>
            <person name="Egan A."/>
            <person name="Galens K."/>
            <person name="Fraser-Liggett C.M."/>
            <person name="Haas B.J."/>
            <person name="Inman J.M."/>
            <person name="Kent R."/>
            <person name="Lemieux S."/>
            <person name="Malavazi I."/>
            <person name="Orvis J."/>
            <person name="Roemer T."/>
            <person name="Ronning C.M."/>
            <person name="Sundaram J.P."/>
            <person name="Sutton G."/>
            <person name="Turner G."/>
            <person name="Venter J.C."/>
            <person name="White O.R."/>
            <person name="Whitty B.R."/>
            <person name="Youngman P."/>
            <person name="Wolfe K.H."/>
            <person name="Goldman G.H."/>
            <person name="Wortman J.R."/>
            <person name="Jiang B."/>
            <person name="Denning D.W."/>
            <person name="Nierman W.C."/>
        </authorList>
    </citation>
    <scope>NUCLEOTIDE SEQUENCE [LARGE SCALE GENOMIC DNA]</scope>
    <source>
        <strain>ATCC 1020 / DSM 3700 / CBS 544.65 / FGSC A1164 / JCM 1740 / NRRL 181 / WB 181</strain>
    </source>
</reference>
<proteinExistence type="inferred from homology"/>
<protein>
    <recommendedName>
        <fullName>Mediator of RNA polymerase II transcription subunit 8</fullName>
    </recommendedName>
    <alternativeName>
        <fullName>Mediator complex subunit 8</fullName>
    </alternativeName>
</protein>
<sequence length="252" mass="27804">MASLNQDQIKTLEQSRQRLVQLTRSLASLIGSLNQSDPLPSWSSLQSQAGIISNNLLSISEHLSDNKDLLSALVAYPGPSYPGRTQAPTLEQLLRTKLDPRVEDWVSRGRRAGASALEDRGALSESALAELWDWAPVEANQEARRRNWGGNFTLEEREMGIQNVVTGLRRQLEDEDEEESESESEEEGEGEEEEMEVVGVRRRSGAGAGLEFDIAAPTPGSRQQQQQKAAGPAVPLEDILRYMTTGIPPTQR</sequence>
<dbReference type="EMBL" id="DS027685">
    <property type="protein sequence ID" value="EAW25288.1"/>
    <property type="molecule type" value="Genomic_DNA"/>
</dbReference>
<dbReference type="RefSeq" id="XP_001267185.1">
    <property type="nucleotide sequence ID" value="XM_001267184.1"/>
</dbReference>
<dbReference type="SMR" id="A1CXD6"/>
<dbReference type="STRING" id="331117.A1CXD6"/>
<dbReference type="EnsemblFungi" id="EAW25288">
    <property type="protein sequence ID" value="EAW25288"/>
    <property type="gene ID" value="NFIA_107800"/>
</dbReference>
<dbReference type="GeneID" id="4593934"/>
<dbReference type="KEGG" id="nfi:NFIA_107800"/>
<dbReference type="VEuPathDB" id="FungiDB:NFIA_107800"/>
<dbReference type="eggNOG" id="ENOG502S8U1">
    <property type="taxonomic scope" value="Eukaryota"/>
</dbReference>
<dbReference type="HOGENOM" id="CLU_074399_1_0_1"/>
<dbReference type="OMA" id="WAPIEAN"/>
<dbReference type="OrthoDB" id="5329317at2759"/>
<dbReference type="Proteomes" id="UP000006702">
    <property type="component" value="Unassembled WGS sequence"/>
</dbReference>
<dbReference type="GO" id="GO:0070847">
    <property type="term" value="C:core mediator complex"/>
    <property type="evidence" value="ECO:0007669"/>
    <property type="project" value="TreeGrafter"/>
</dbReference>
<dbReference type="GO" id="GO:0016592">
    <property type="term" value="C:mediator complex"/>
    <property type="evidence" value="ECO:0007669"/>
    <property type="project" value="InterPro"/>
</dbReference>
<dbReference type="GO" id="GO:0000978">
    <property type="term" value="F:RNA polymerase II cis-regulatory region sequence-specific DNA binding"/>
    <property type="evidence" value="ECO:0007669"/>
    <property type="project" value="TreeGrafter"/>
</dbReference>
<dbReference type="GO" id="GO:0003712">
    <property type="term" value="F:transcription coregulator activity"/>
    <property type="evidence" value="ECO:0007669"/>
    <property type="project" value="InterPro"/>
</dbReference>
<dbReference type="GO" id="GO:0006357">
    <property type="term" value="P:regulation of transcription by RNA polymerase II"/>
    <property type="evidence" value="ECO:0007669"/>
    <property type="project" value="InterPro"/>
</dbReference>
<dbReference type="FunFam" id="1.20.58.1710:FF:000002">
    <property type="entry name" value="Mediator of RNA polymerase II transcription subunit 8"/>
    <property type="match status" value="1"/>
</dbReference>
<dbReference type="Gene3D" id="1.20.58.1710">
    <property type="match status" value="1"/>
</dbReference>
<dbReference type="Gene3D" id="6.10.250.2610">
    <property type="match status" value="1"/>
</dbReference>
<dbReference type="InterPro" id="IPR019364">
    <property type="entry name" value="Mediatior_Med8_fun/met"/>
</dbReference>
<dbReference type="PANTHER" id="PTHR13074">
    <property type="entry name" value="MEDIATOR OF RNA POLYMERASE II TRANSCRIPTION SUBUNIT 8"/>
    <property type="match status" value="1"/>
</dbReference>
<dbReference type="PANTHER" id="PTHR13074:SF9">
    <property type="entry name" value="MEDIATOR OF RNA POLYMERASE II TRANSCRIPTION SUBUNIT 8"/>
    <property type="match status" value="1"/>
</dbReference>
<dbReference type="Pfam" id="PF10232">
    <property type="entry name" value="Med8"/>
    <property type="match status" value="1"/>
</dbReference>
<accession>A1CXD6</accession>